<proteinExistence type="inferred from homology"/>
<reference key="1">
    <citation type="journal article" date="2009" name="PLoS Genet.">
        <title>Organised genome dynamics in the Escherichia coli species results in highly diverse adaptive paths.</title>
        <authorList>
            <person name="Touchon M."/>
            <person name="Hoede C."/>
            <person name="Tenaillon O."/>
            <person name="Barbe V."/>
            <person name="Baeriswyl S."/>
            <person name="Bidet P."/>
            <person name="Bingen E."/>
            <person name="Bonacorsi S."/>
            <person name="Bouchier C."/>
            <person name="Bouvet O."/>
            <person name="Calteau A."/>
            <person name="Chiapello H."/>
            <person name="Clermont O."/>
            <person name="Cruveiller S."/>
            <person name="Danchin A."/>
            <person name="Diard M."/>
            <person name="Dossat C."/>
            <person name="Karoui M.E."/>
            <person name="Frapy E."/>
            <person name="Garry L."/>
            <person name="Ghigo J.M."/>
            <person name="Gilles A.M."/>
            <person name="Johnson J."/>
            <person name="Le Bouguenec C."/>
            <person name="Lescat M."/>
            <person name="Mangenot S."/>
            <person name="Martinez-Jehanne V."/>
            <person name="Matic I."/>
            <person name="Nassif X."/>
            <person name="Oztas S."/>
            <person name="Petit M.A."/>
            <person name="Pichon C."/>
            <person name="Rouy Z."/>
            <person name="Ruf C.S."/>
            <person name="Schneider D."/>
            <person name="Tourret J."/>
            <person name="Vacherie B."/>
            <person name="Vallenet D."/>
            <person name="Medigue C."/>
            <person name="Rocha E.P.C."/>
            <person name="Denamur E."/>
        </authorList>
    </citation>
    <scope>NUCLEOTIDE SEQUENCE [LARGE SCALE GENOMIC DNA]</scope>
    <source>
        <strain>ATCC 35469 / DSM 13698 / BCRC 15582 / CCUG 18766 / IAM 14443 / JCM 21226 / LMG 7866 / NBRC 102419 / NCTC 12128 / CDC 0568-73</strain>
    </source>
</reference>
<feature type="chain" id="PRO_1000140410" description="5-keto-4-deoxy-D-glucarate aldolase">
    <location>
        <begin position="1"/>
        <end position="256"/>
    </location>
</feature>
<feature type="active site" description="Proton acceptor" evidence="1">
    <location>
        <position position="50"/>
    </location>
</feature>
<feature type="binding site" evidence="1">
    <location>
        <position position="151"/>
    </location>
    <ligand>
        <name>substrate</name>
    </ligand>
</feature>
<feature type="binding site" evidence="1">
    <location>
        <position position="153"/>
    </location>
    <ligand>
        <name>Mg(2+)</name>
        <dbReference type="ChEBI" id="CHEBI:18420"/>
    </ligand>
</feature>
<feature type="binding site" evidence="1">
    <location>
        <position position="178"/>
    </location>
    <ligand>
        <name>substrate</name>
    </ligand>
</feature>
<feature type="binding site" evidence="1">
    <location>
        <position position="179"/>
    </location>
    <ligand>
        <name>Mg(2+)</name>
        <dbReference type="ChEBI" id="CHEBI:18420"/>
    </ligand>
</feature>
<feature type="binding site" evidence="1">
    <location>
        <position position="179"/>
    </location>
    <ligand>
        <name>substrate</name>
    </ligand>
</feature>
<feature type="site" description="Transition state stabilizer" evidence="1">
    <location>
        <position position="75"/>
    </location>
</feature>
<feature type="site" description="Increases basicity of active site His" evidence="1">
    <location>
        <position position="89"/>
    </location>
</feature>
<organism>
    <name type="scientific">Escherichia fergusonii (strain ATCC 35469 / DSM 13698 / CCUG 18766 / IAM 14443 / JCM 21226 / LMG 7866 / NBRC 102419 / NCTC 12128 / CDC 0568-73)</name>
    <dbReference type="NCBI Taxonomy" id="585054"/>
    <lineage>
        <taxon>Bacteria</taxon>
        <taxon>Pseudomonadati</taxon>
        <taxon>Pseudomonadota</taxon>
        <taxon>Gammaproteobacteria</taxon>
        <taxon>Enterobacterales</taxon>
        <taxon>Enterobacteriaceae</taxon>
        <taxon>Escherichia</taxon>
    </lineage>
</organism>
<dbReference type="EC" id="4.1.2.20" evidence="1"/>
<dbReference type="EMBL" id="CU928158">
    <property type="protein sequence ID" value="CAQ91784.1"/>
    <property type="molecule type" value="Genomic_DNA"/>
</dbReference>
<dbReference type="RefSeq" id="WP_001058567.1">
    <property type="nucleotide sequence ID" value="NC_011740.1"/>
</dbReference>
<dbReference type="SMR" id="B7LMV6"/>
<dbReference type="GeneID" id="75059048"/>
<dbReference type="KEGG" id="efe:EFER_4366"/>
<dbReference type="HOGENOM" id="CLU_059964_1_0_6"/>
<dbReference type="OrthoDB" id="86160at2"/>
<dbReference type="UniPathway" id="UPA00565">
    <property type="reaction ID" value="UER00630"/>
</dbReference>
<dbReference type="Proteomes" id="UP000000745">
    <property type="component" value="Chromosome"/>
</dbReference>
<dbReference type="GO" id="GO:0005737">
    <property type="term" value="C:cytoplasm"/>
    <property type="evidence" value="ECO:0007669"/>
    <property type="project" value="TreeGrafter"/>
</dbReference>
<dbReference type="GO" id="GO:0008672">
    <property type="term" value="F:2-dehydro-3-deoxyglucarate aldolase activity"/>
    <property type="evidence" value="ECO:0007669"/>
    <property type="project" value="UniProtKB-UniRule"/>
</dbReference>
<dbReference type="GO" id="GO:0000287">
    <property type="term" value="F:magnesium ion binding"/>
    <property type="evidence" value="ECO:0007669"/>
    <property type="project" value="UniProtKB-UniRule"/>
</dbReference>
<dbReference type="GO" id="GO:0042838">
    <property type="term" value="P:D-glucarate catabolic process"/>
    <property type="evidence" value="ECO:0007669"/>
    <property type="project" value="UniProtKB-UniRule"/>
</dbReference>
<dbReference type="GO" id="GO:0046392">
    <property type="term" value="P:galactarate catabolic process"/>
    <property type="evidence" value="ECO:0007669"/>
    <property type="project" value="UniProtKB-UniRule"/>
</dbReference>
<dbReference type="FunFam" id="3.20.20.60:FF:000004">
    <property type="entry name" value="5-keto-4-deoxy-D-glucarate aldolase"/>
    <property type="match status" value="1"/>
</dbReference>
<dbReference type="Gene3D" id="3.20.20.60">
    <property type="entry name" value="Phosphoenolpyruvate-binding domains"/>
    <property type="match status" value="1"/>
</dbReference>
<dbReference type="HAMAP" id="MF_01291">
    <property type="entry name" value="KDGluc_aldolase"/>
    <property type="match status" value="1"/>
</dbReference>
<dbReference type="InterPro" id="IPR005000">
    <property type="entry name" value="Aldolase/citrate-lyase_domain"/>
</dbReference>
<dbReference type="InterPro" id="IPR017648">
    <property type="entry name" value="GarL"/>
</dbReference>
<dbReference type="InterPro" id="IPR050251">
    <property type="entry name" value="HpcH-HpaI_aldolase"/>
</dbReference>
<dbReference type="InterPro" id="IPR015813">
    <property type="entry name" value="Pyrv/PenolPyrv_kinase-like_dom"/>
</dbReference>
<dbReference type="InterPro" id="IPR040442">
    <property type="entry name" value="Pyrv_kinase-like_dom_sf"/>
</dbReference>
<dbReference type="NCBIfam" id="TIGR03239">
    <property type="entry name" value="GarL"/>
    <property type="match status" value="1"/>
</dbReference>
<dbReference type="NCBIfam" id="NF007849">
    <property type="entry name" value="PRK10558.1"/>
    <property type="match status" value="1"/>
</dbReference>
<dbReference type="PANTHER" id="PTHR30502">
    <property type="entry name" value="2-KETO-3-DEOXY-L-RHAMNONATE ALDOLASE"/>
    <property type="match status" value="1"/>
</dbReference>
<dbReference type="PANTHER" id="PTHR30502:SF4">
    <property type="entry name" value="5-KETO-4-DEOXY-D-GLUCARATE ALDOLASE"/>
    <property type="match status" value="1"/>
</dbReference>
<dbReference type="Pfam" id="PF03328">
    <property type="entry name" value="HpcH_HpaI"/>
    <property type="match status" value="1"/>
</dbReference>
<dbReference type="SUPFAM" id="SSF51621">
    <property type="entry name" value="Phosphoenolpyruvate/pyruvate domain"/>
    <property type="match status" value="1"/>
</dbReference>
<gene>
    <name evidence="1" type="primary">garL</name>
    <name type="ordered locus">EFER_4366</name>
</gene>
<protein>
    <recommendedName>
        <fullName evidence="1">5-keto-4-deoxy-D-glucarate aldolase</fullName>
        <shortName evidence="1">KDGluc aldolase</shortName>
        <shortName evidence="1">KDGlucA</shortName>
        <ecNumber evidence="1">4.1.2.20</ecNumber>
    </recommendedName>
    <alternativeName>
        <fullName evidence="1">2-dehydro-3-deoxy-D-glucarate aldolase</fullName>
    </alternativeName>
    <alternativeName>
        <fullName evidence="1">2-keto-3-deoxy-D-glucarate aldolase</fullName>
    </alternativeName>
    <alternativeName>
        <fullName evidence="1">5-dehydro-4-deoxy-D-glucarate aldolase</fullName>
    </alternativeName>
    <alternativeName>
        <fullName evidence="1">Alpha-keto-beta-deoxy-D-glucarate aldolase</fullName>
    </alternativeName>
</protein>
<comment type="function">
    <text evidence="1">Catalyzes the reversible retro-aldol cleavage of both 5-keto-4-deoxy-D-glucarate and 2-keto-3-deoxy-D-glucarate to pyruvate and tartronic semialdehyde.</text>
</comment>
<comment type="catalytic activity">
    <reaction evidence="1">
        <text>5-dehydro-4-deoxy-D-glucarate = 2-hydroxy-3-oxopropanoate + pyruvate</text>
        <dbReference type="Rhea" id="RHEA:27726"/>
        <dbReference type="ChEBI" id="CHEBI:15361"/>
        <dbReference type="ChEBI" id="CHEBI:42819"/>
        <dbReference type="ChEBI" id="CHEBI:57978"/>
    </reaction>
</comment>
<comment type="catalytic activity">
    <reaction evidence="1">
        <text>2-dehydro-3-deoxy-D-glucarate = 2-hydroxy-3-oxopropanoate + pyruvate</text>
        <dbReference type="Rhea" id="RHEA:10268"/>
        <dbReference type="ChEBI" id="CHEBI:15361"/>
        <dbReference type="ChEBI" id="CHEBI:57978"/>
        <dbReference type="ChEBI" id="CHEBI:58098"/>
        <dbReference type="EC" id="4.1.2.20"/>
    </reaction>
</comment>
<comment type="cofactor">
    <cofactor evidence="1">
        <name>Mg(2+)</name>
        <dbReference type="ChEBI" id="CHEBI:18420"/>
    </cofactor>
    <text evidence="1">Binds 1 Mg(2+) ion per subunit.</text>
</comment>
<comment type="pathway">
    <text evidence="1">Carbohydrate acid metabolism; galactarate degradation; D-glycerate from galactarate: step 2/3.</text>
</comment>
<comment type="subunit">
    <text evidence="1">Homohexamer; trimer of dimers.</text>
</comment>
<comment type="similarity">
    <text evidence="1">Belongs to the HpcH/HpaI aldolase family. KDGluc aldolase subfamily.</text>
</comment>
<name>GARL_ESCF3</name>
<evidence type="ECO:0000255" key="1">
    <source>
        <dbReference type="HAMAP-Rule" id="MF_01291"/>
    </source>
</evidence>
<accession>B7LMV6</accession>
<keyword id="KW-0456">Lyase</keyword>
<keyword id="KW-0460">Magnesium</keyword>
<keyword id="KW-0479">Metal-binding</keyword>
<sequence length="256" mass="27426">MNNEVFPNKFKAALAAHQVQIGCWSALANPISTEVLGLAGFDWLVLDGEHAPNDVTTLIPQLMALKGSISAPVVRVPTNEPVIIKRMLDIGFYNFLIPFVETKEQAINAVAATRYPPEGIRGVSVSHRANMFGTVPDYFVQSNKNITILVQIESQLGVDNVDAIAATEGVDGIFVGPSDLAAALGHLGNASHPQVQKAIQHIFARAKANGKPSGILAPVEADARRYLEWGATFVAVGSDLGVFRTGTQRLADSFKK</sequence>